<geneLocation type="chloroplast"/>
<feature type="chain" id="PRO_0000275535" description="Cytochrome b6-f complex subunit 6">
    <location>
        <begin position="1"/>
        <end position="31"/>
    </location>
</feature>
<feature type="transmembrane region" description="Helical" evidence="1">
    <location>
        <begin position="4"/>
        <end position="24"/>
    </location>
</feature>
<evidence type="ECO:0000255" key="1">
    <source>
        <dbReference type="HAMAP-Rule" id="MF_00433"/>
    </source>
</evidence>
<reference key="1">
    <citation type="journal article" date="2007" name="Theor. Appl. Genet.">
        <title>Complete chloroplast genome sequences of Hordeum vulgare, Sorghum bicolor and Agrostis stolonifera, and comparative analyses with other grass genomes.</title>
        <authorList>
            <person name="Saski C."/>
            <person name="Lee S.-B."/>
            <person name="Fjellheim S."/>
            <person name="Guda C."/>
            <person name="Jansen R.K."/>
            <person name="Luo H."/>
            <person name="Tomkins J."/>
            <person name="Rognli O.A."/>
            <person name="Daniell H."/>
            <person name="Clarke J.L."/>
        </authorList>
    </citation>
    <scope>NUCLEOTIDE SEQUENCE [LARGE SCALE GENOMIC DNA]</scope>
    <source>
        <strain>cv. BTx623</strain>
    </source>
</reference>
<organism>
    <name type="scientific">Sorghum bicolor</name>
    <name type="common">Sorghum</name>
    <name type="synonym">Sorghum vulgare</name>
    <dbReference type="NCBI Taxonomy" id="4558"/>
    <lineage>
        <taxon>Eukaryota</taxon>
        <taxon>Viridiplantae</taxon>
        <taxon>Streptophyta</taxon>
        <taxon>Embryophyta</taxon>
        <taxon>Tracheophyta</taxon>
        <taxon>Spermatophyta</taxon>
        <taxon>Magnoliopsida</taxon>
        <taxon>Liliopsida</taxon>
        <taxon>Poales</taxon>
        <taxon>Poaceae</taxon>
        <taxon>PACMAD clade</taxon>
        <taxon>Panicoideae</taxon>
        <taxon>Andropogonodae</taxon>
        <taxon>Andropogoneae</taxon>
        <taxon>Sorghinae</taxon>
        <taxon>Sorghum</taxon>
    </lineage>
</organism>
<gene>
    <name evidence="1" type="primary">petL</name>
</gene>
<keyword id="KW-0150">Chloroplast</keyword>
<keyword id="KW-0249">Electron transport</keyword>
<keyword id="KW-0472">Membrane</keyword>
<keyword id="KW-0602">Photosynthesis</keyword>
<keyword id="KW-0934">Plastid</keyword>
<keyword id="KW-1185">Reference proteome</keyword>
<keyword id="KW-0793">Thylakoid</keyword>
<keyword id="KW-0812">Transmembrane</keyword>
<keyword id="KW-1133">Transmembrane helix</keyword>
<keyword id="KW-0813">Transport</keyword>
<comment type="function">
    <text evidence="1">Component of the cytochrome b6-f complex, which mediates electron transfer between photosystem II (PSII) and photosystem I (PSI), cyclic electron flow around PSI, and state transitions. PetL is important for photoautotrophic growth as well as for electron transfer efficiency and stability of the cytochrome b6-f complex.</text>
</comment>
<comment type="subunit">
    <text evidence="1">The 4 large subunits of the cytochrome b6-f complex are cytochrome b6, subunit IV (17 kDa polypeptide, PetD), cytochrome f and the Rieske protein, while the 4 small subunits are PetG, PetL, PetM and PetN. The complex functions as a dimer.</text>
</comment>
<comment type="subcellular location">
    <subcellularLocation>
        <location evidence="1">Plastid</location>
        <location evidence="1">Chloroplast thylakoid membrane</location>
        <topology evidence="1">Single-pass membrane protein</topology>
    </subcellularLocation>
</comment>
<comment type="similarity">
    <text evidence="1">Belongs to the PetL family.</text>
</comment>
<protein>
    <recommendedName>
        <fullName evidence="1">Cytochrome b6-f complex subunit 6</fullName>
    </recommendedName>
    <alternativeName>
        <fullName evidence="1">Cytochrome b6-f complex subunit PetL</fullName>
    </alternativeName>
    <alternativeName>
        <fullName evidence="1">Cytochrome b6-f complex subunit VI</fullName>
    </alternativeName>
</protein>
<name>PETL_SORBI</name>
<dbReference type="EMBL" id="EF115542">
    <property type="protein sequence ID" value="ABK79514.1"/>
    <property type="molecule type" value="Genomic_DNA"/>
</dbReference>
<dbReference type="RefSeq" id="YP_899425.1">
    <property type="nucleotide sequence ID" value="NC_008602.1"/>
</dbReference>
<dbReference type="SMR" id="A1E9U2"/>
<dbReference type="GeneID" id="4549177"/>
<dbReference type="KEGG" id="sbi:4549177"/>
<dbReference type="InParanoid" id="A1E9U2"/>
<dbReference type="OrthoDB" id="622343at2759"/>
<dbReference type="Proteomes" id="UP000000768">
    <property type="component" value="Chloroplast"/>
</dbReference>
<dbReference type="GO" id="GO:0009535">
    <property type="term" value="C:chloroplast thylakoid membrane"/>
    <property type="evidence" value="ECO:0007669"/>
    <property type="project" value="UniProtKB-SubCell"/>
</dbReference>
<dbReference type="GO" id="GO:0009512">
    <property type="term" value="C:cytochrome b6f complex"/>
    <property type="evidence" value="ECO:0007669"/>
    <property type="project" value="InterPro"/>
</dbReference>
<dbReference type="GO" id="GO:0045158">
    <property type="term" value="F:electron transporter, transferring electrons within cytochrome b6/f complex of photosystem II activity"/>
    <property type="evidence" value="ECO:0007669"/>
    <property type="project" value="UniProtKB-UniRule"/>
</dbReference>
<dbReference type="GO" id="GO:0015979">
    <property type="term" value="P:photosynthesis"/>
    <property type="evidence" value="ECO:0007669"/>
    <property type="project" value="UniProtKB-KW"/>
</dbReference>
<dbReference type="HAMAP" id="MF_00433">
    <property type="entry name" value="Cytb6_f_PetL"/>
    <property type="match status" value="1"/>
</dbReference>
<dbReference type="InterPro" id="IPR007802">
    <property type="entry name" value="Cyt_b6/f_cplx_su6"/>
</dbReference>
<dbReference type="PANTHER" id="PTHR37266">
    <property type="entry name" value="CYTOCHROME B6-F COMPLEX SUBUNIT 6"/>
    <property type="match status" value="1"/>
</dbReference>
<dbReference type="PANTHER" id="PTHR37266:SF1">
    <property type="entry name" value="CYTOCHROME B6-F COMPLEX SUBUNIT 6"/>
    <property type="match status" value="1"/>
</dbReference>
<dbReference type="Pfam" id="PF05115">
    <property type="entry name" value="PetL"/>
    <property type="match status" value="1"/>
</dbReference>
<dbReference type="SUPFAM" id="SSF103436">
    <property type="entry name" value="PetL subunit of the cytochrome b6f complex"/>
    <property type="match status" value="1"/>
</dbReference>
<proteinExistence type="inferred from homology"/>
<accession>A1E9U2</accession>
<sequence length="31" mass="3426">MLTITSYFGFLLAALTITPALFIGLNKIRLI</sequence>